<protein>
    <recommendedName>
        <fullName>Chlorophyll a-b binding protein of LHCII type I, chloroplastic</fullName>
        <shortName>CAB</shortName>
        <shortName>LHCP</shortName>
    </recommendedName>
</protein>
<name>CB21_LEMGI</name>
<comment type="function">
    <text>The light-harvesting complex (LHC) functions as a light receptor, it captures and delivers excitation energy to photosystems with which it is closely associated.</text>
</comment>
<comment type="cofactor">
    <text evidence="1">Binds at least 14 chlorophylls (8 Chl-a and 6 Chl-b) and carotenoids such as lutein and neoxanthin.</text>
</comment>
<comment type="subunit">
    <text>The LHC complex consists of chlorophyll a-b binding proteins.</text>
</comment>
<comment type="subcellular location">
    <subcellularLocation>
        <location>Plastid</location>
        <location>Chloroplast thylakoid membrane</location>
        <topology>Multi-pass membrane protein</topology>
    </subcellularLocation>
</comment>
<comment type="domain">
    <text>The N-terminus of the protein extends into the stroma where it is involved with adhesion of granal membranes and post-translational modifications; both are believed to mediate the distribution of excitation energy between photosystems I and II.</text>
</comment>
<comment type="PTM">
    <text evidence="1">Photoregulated by reversible phosphorylation of its threonine residues.</text>
</comment>
<comment type="similarity">
    <text evidence="5">Belongs to the light-harvesting chlorophyll a/b-binding (LHC) protein family.</text>
</comment>
<keyword id="KW-0007">Acetylation</keyword>
<keyword id="KW-0148">Chlorophyll</keyword>
<keyword id="KW-0150">Chloroplast</keyword>
<keyword id="KW-0157">Chromophore</keyword>
<keyword id="KW-0460">Magnesium</keyword>
<keyword id="KW-0472">Membrane</keyword>
<keyword id="KW-0479">Metal-binding</keyword>
<keyword id="KW-0597">Phosphoprotein</keyword>
<keyword id="KW-0602">Photosynthesis</keyword>
<keyword id="KW-0603">Photosystem I</keyword>
<keyword id="KW-0604">Photosystem II</keyword>
<keyword id="KW-0934">Plastid</keyword>
<keyword id="KW-0793">Thylakoid</keyword>
<keyword id="KW-0809">Transit peptide</keyword>
<keyword id="KW-0812">Transmembrane</keyword>
<keyword id="KW-1133">Transmembrane helix</keyword>
<feature type="transit peptide" description="Chloroplast" evidence="5">
    <location>
        <begin position="1"/>
        <end position="36"/>
    </location>
</feature>
<feature type="chain" id="PRO_0000003661" description="Chlorophyll a-b binding protein of LHCII type I, chloroplastic">
    <location>
        <begin position="37"/>
        <end position="264"/>
    </location>
</feature>
<feature type="transmembrane region" description="Helical" evidence="4">
    <location>
        <begin position="98"/>
        <end position="118"/>
    </location>
</feature>
<feature type="transmembrane region" description="Helical" evidence="4">
    <location>
        <begin position="150"/>
        <end position="170"/>
    </location>
</feature>
<feature type="transmembrane region" description="Helical" evidence="4">
    <location>
        <begin position="218"/>
        <end position="238"/>
    </location>
</feature>
<feature type="binding site" description="axial binding residue" evidence="1">
    <location>
        <position position="56"/>
    </location>
    <ligand>
        <name>chlorophyll b</name>
        <dbReference type="ChEBI" id="CHEBI:61721"/>
        <label>1</label>
    </ligand>
    <ligandPart>
        <name>Mg</name>
        <dbReference type="ChEBI" id="CHEBI:25107"/>
    </ligandPart>
</feature>
<feature type="binding site" evidence="1">
    <location>
        <position position="78"/>
    </location>
    <ligand>
        <name>chlorophyll a</name>
        <dbReference type="ChEBI" id="CHEBI:58416"/>
        <label>1</label>
    </ligand>
</feature>
<feature type="binding site" evidence="1">
    <location>
        <position position="84"/>
    </location>
    <ligand>
        <name>chlorophyll a</name>
        <dbReference type="ChEBI" id="CHEBI:58416"/>
        <label>1</label>
    </ligand>
</feature>
<feature type="binding site" description="axial binding residue" evidence="3">
    <location>
        <position position="97"/>
    </location>
    <ligand>
        <name>chlorophyll a</name>
        <dbReference type="ChEBI" id="CHEBI:58416"/>
        <label>1</label>
    </ligand>
    <ligandPart>
        <name>Mg</name>
        <dbReference type="ChEBI" id="CHEBI:25107"/>
    </ligandPart>
</feature>
<feature type="binding site" description="axial binding residue" evidence="3">
    <location>
        <position position="100"/>
    </location>
    <ligand>
        <name>chlorophyll a</name>
        <dbReference type="ChEBI" id="CHEBI:58416"/>
        <label>2</label>
    </ligand>
    <ligandPart>
        <name>Mg</name>
        <dbReference type="ChEBI" id="CHEBI:25107"/>
    </ligandPart>
</feature>
<feature type="binding site" evidence="1">
    <location>
        <position position="102"/>
    </location>
    <ligand>
        <name>chlorophyll b</name>
        <dbReference type="ChEBI" id="CHEBI:61721"/>
        <label>2</label>
    </ligand>
</feature>
<feature type="binding site" evidence="1">
    <location>
        <position position="135"/>
    </location>
    <ligand>
        <name>chlorophyll a</name>
        <dbReference type="ChEBI" id="CHEBI:58416"/>
        <label>3</label>
    </ligand>
</feature>
<feature type="binding site" evidence="1">
    <location>
        <position position="145"/>
    </location>
    <ligand>
        <name>chlorophyll a</name>
        <dbReference type="ChEBI" id="CHEBI:58416"/>
        <label>3</label>
    </ligand>
</feature>
<feature type="binding site" description="axial binding residue" evidence="3">
    <location>
        <position position="151"/>
    </location>
    <ligand>
        <name>chlorophyll b</name>
        <dbReference type="ChEBI" id="CHEBI:61721"/>
        <label>2</label>
    </ligand>
    <ligandPart>
        <name>Mg</name>
        <dbReference type="ChEBI" id="CHEBI:25107"/>
    </ligandPart>
</feature>
<feature type="binding site" evidence="1">
    <location>
        <position position="155"/>
    </location>
    <ligand>
        <name>chlorophyll b</name>
        <dbReference type="ChEBI" id="CHEBI:61721"/>
        <label>3</label>
    </ligand>
</feature>
<feature type="binding site" evidence="1">
    <location>
        <position position="163"/>
    </location>
    <ligand>
        <name>chlorophyll b</name>
        <dbReference type="ChEBI" id="CHEBI:61721"/>
        <label>4</label>
    </ligand>
</feature>
<feature type="binding site" evidence="2">
    <location>
        <position position="163"/>
    </location>
    <ligand>
        <name>chlorophyll b</name>
        <dbReference type="ChEBI" id="CHEBI:61721"/>
        <label>5</label>
    </ligand>
</feature>
<feature type="binding site" description="axial binding residue" evidence="3">
    <location>
        <position position="171"/>
    </location>
    <ligand>
        <name>chlorophyll b</name>
        <dbReference type="ChEBI" id="CHEBI:61721"/>
        <label>3</label>
    </ligand>
    <ligandPart>
        <name>Mg</name>
        <dbReference type="ChEBI" id="CHEBI:25107"/>
    </ligandPart>
</feature>
<feature type="binding site" evidence="1">
    <location>
        <position position="174"/>
    </location>
    <ligand>
        <name>chlorophyll b</name>
        <dbReference type="ChEBI" id="CHEBI:61721"/>
        <label>4</label>
    </ligand>
</feature>
<feature type="binding site" evidence="1">
    <location>
        <position position="180"/>
    </location>
    <ligand>
        <name>chlorophyll b</name>
        <dbReference type="ChEBI" id="CHEBI:61721"/>
        <label>2</label>
    </ligand>
</feature>
<feature type="binding site" evidence="1">
    <location>
        <position position="211"/>
    </location>
    <ligand>
        <name>chlorophyll a</name>
        <dbReference type="ChEBI" id="CHEBI:58416"/>
        <label>5</label>
    </ligand>
</feature>
<feature type="binding site" description="axial binding residue" evidence="3">
    <location>
        <position position="212"/>
    </location>
    <ligand>
        <name>chlorophyll a</name>
        <dbReference type="ChEBI" id="CHEBI:58416"/>
        <label>3</label>
    </ligand>
    <ligandPart>
        <name>Mg</name>
        <dbReference type="ChEBI" id="CHEBI:25107"/>
    </ligandPart>
</feature>
<feature type="binding site" description="axial binding residue" evidence="3">
    <location>
        <position position="215"/>
    </location>
    <ligand>
        <name>chlorophyll a</name>
        <dbReference type="ChEBI" id="CHEBI:58416"/>
        <label>4</label>
    </ligand>
    <ligandPart>
        <name>Mg</name>
        <dbReference type="ChEBI" id="CHEBI:25107"/>
    </ligandPart>
</feature>
<feature type="binding site" evidence="1">
    <location>
        <position position="217"/>
    </location>
    <ligand>
        <name>chlorophyll a</name>
        <dbReference type="ChEBI" id="CHEBI:58416"/>
        <label>1</label>
    </ligand>
</feature>
<feature type="binding site" description="axial binding residue" evidence="3">
    <location>
        <position position="229"/>
    </location>
    <ligand>
        <name>chlorophyll a</name>
        <dbReference type="ChEBI" id="CHEBI:58416"/>
        <label>5</label>
    </ligand>
    <ligandPart>
        <name>Mg</name>
        <dbReference type="ChEBI" id="CHEBI:25107"/>
    </ligandPart>
</feature>
<feature type="binding site" description="axial binding residue" evidence="3">
    <location>
        <position position="244"/>
    </location>
    <ligand>
        <name>chlorophyll a</name>
        <dbReference type="ChEBI" id="CHEBI:58416"/>
        <label>6</label>
    </ligand>
    <ligandPart>
        <name>Mg</name>
        <dbReference type="ChEBI" id="CHEBI:25107"/>
    </ligandPart>
</feature>
<feature type="binding site" evidence="1">
    <location>
        <position position="253"/>
    </location>
    <ligand>
        <name>chlorophyll a</name>
        <dbReference type="ChEBI" id="CHEBI:58416"/>
        <label>6</label>
    </ligand>
</feature>
<feature type="binding site" evidence="1">
    <location>
        <position position="260"/>
    </location>
    <ligand>
        <name>chlorophyll b</name>
        <dbReference type="ChEBI" id="CHEBI:61721"/>
        <label>5</label>
    </ligand>
</feature>
<feature type="modified residue" description="N2-acetylarginine" evidence="1">
    <location>
        <position position="37"/>
    </location>
</feature>
<feature type="modified residue" description="Phosphothreonine" evidence="1">
    <location>
        <position position="39"/>
    </location>
</feature>
<sequence>MAASAIQSSAFAGQTALKQRDELVRKVGVSDGRFSMRRTVKAVPQSIWYGADRPKFLGPFSEQTPSYLTGEFPGDYGWDTAGLSADPETFAKNRELEVIHSRWAMLGALGCIFPELLSKNGVQFGEAVWFKAGAQIFSEGGLDYLGNPNLVHAQSILAIWATQVVLMGLIEGYRVGGGPLGEGLDPLYPGGAFDPLGLADDPEAFAELKVKEIKNGRLAMFSMFGFFVQAIVTGKGPIENLADHIADPVANNAWAFATNFVPGK</sequence>
<accession>P12328</accession>
<evidence type="ECO:0000250" key="1"/>
<evidence type="ECO:0000250" key="2">
    <source>
        <dbReference type="UniProtKB" id="P07371"/>
    </source>
</evidence>
<evidence type="ECO:0000250" key="3">
    <source>
        <dbReference type="UniProtKB" id="P12333"/>
    </source>
</evidence>
<evidence type="ECO:0000255" key="4"/>
<evidence type="ECO:0000305" key="5"/>
<dbReference type="EMBL" id="M12152">
    <property type="protein sequence ID" value="AAA33392.1"/>
    <property type="molecule type" value="Genomic_DNA"/>
</dbReference>
<dbReference type="PIR" id="S07448">
    <property type="entry name" value="S07448"/>
</dbReference>
<dbReference type="SMR" id="P12328"/>
<dbReference type="GO" id="GO:0009535">
    <property type="term" value="C:chloroplast thylakoid membrane"/>
    <property type="evidence" value="ECO:0007669"/>
    <property type="project" value="UniProtKB-SubCell"/>
</dbReference>
<dbReference type="GO" id="GO:0009522">
    <property type="term" value="C:photosystem I"/>
    <property type="evidence" value="ECO:0007669"/>
    <property type="project" value="UniProtKB-KW"/>
</dbReference>
<dbReference type="GO" id="GO:0009523">
    <property type="term" value="C:photosystem II"/>
    <property type="evidence" value="ECO:0007669"/>
    <property type="project" value="UniProtKB-KW"/>
</dbReference>
<dbReference type="GO" id="GO:0016168">
    <property type="term" value="F:chlorophyll binding"/>
    <property type="evidence" value="ECO:0007669"/>
    <property type="project" value="UniProtKB-KW"/>
</dbReference>
<dbReference type="GO" id="GO:0046872">
    <property type="term" value="F:metal ion binding"/>
    <property type="evidence" value="ECO:0007669"/>
    <property type="project" value="UniProtKB-KW"/>
</dbReference>
<dbReference type="GO" id="GO:0009765">
    <property type="term" value="P:photosynthesis, light harvesting"/>
    <property type="evidence" value="ECO:0007669"/>
    <property type="project" value="InterPro"/>
</dbReference>
<dbReference type="FunFam" id="1.10.3460.10:FF:000001">
    <property type="entry name" value="Chlorophyll a-b binding protein, chloroplastic"/>
    <property type="match status" value="1"/>
</dbReference>
<dbReference type="Gene3D" id="1.10.3460.10">
    <property type="entry name" value="Chlorophyll a/b binding protein domain"/>
    <property type="match status" value="1"/>
</dbReference>
<dbReference type="InterPro" id="IPR001344">
    <property type="entry name" value="Chloro_AB-bd_pln"/>
</dbReference>
<dbReference type="InterPro" id="IPR022796">
    <property type="entry name" value="Chloroa_b-bind"/>
</dbReference>
<dbReference type="PANTHER" id="PTHR21649">
    <property type="entry name" value="CHLOROPHYLL A/B BINDING PROTEIN"/>
    <property type="match status" value="1"/>
</dbReference>
<dbReference type="Pfam" id="PF00504">
    <property type="entry name" value="Chloroa_b-bind"/>
    <property type="match status" value="1"/>
</dbReference>
<dbReference type="SUPFAM" id="SSF103511">
    <property type="entry name" value="Chlorophyll a-b binding protein"/>
    <property type="match status" value="1"/>
</dbReference>
<organism>
    <name type="scientific">Lemna gibba</name>
    <name type="common">Swollen duckweed</name>
    <dbReference type="NCBI Taxonomy" id="4470"/>
    <lineage>
        <taxon>Eukaryota</taxon>
        <taxon>Viridiplantae</taxon>
        <taxon>Streptophyta</taxon>
        <taxon>Embryophyta</taxon>
        <taxon>Tracheophyta</taxon>
        <taxon>Spermatophyta</taxon>
        <taxon>Magnoliopsida</taxon>
        <taxon>Liliopsida</taxon>
        <taxon>Araceae</taxon>
        <taxon>Lemnoideae</taxon>
        <taxon>Lemna</taxon>
    </lineage>
</organism>
<proteinExistence type="inferred from homology"/>
<reference key="1">
    <citation type="journal article" date="1985" name="J. Mol. Appl. Genet.">
        <title>A chlorophyll a/b-protein encoded by a gene containing an intron with characteristics of a transposable element.</title>
        <authorList>
            <person name="Karlin-Neumann G.A."/>
            <person name="Kohorn B.D."/>
            <person name="Thornber J.P."/>
            <person name="Tobin E.M."/>
        </authorList>
    </citation>
    <scope>NUCLEOTIDE SEQUENCE [GENOMIC DNA]</scope>
</reference>